<dbReference type="EMBL" id="AL591688">
    <property type="protein sequence ID" value="CAC45941.1"/>
    <property type="molecule type" value="Genomic_DNA"/>
</dbReference>
<dbReference type="RefSeq" id="NP_385468.1">
    <property type="nucleotide sequence ID" value="NC_003047.1"/>
</dbReference>
<dbReference type="RefSeq" id="WP_003536533.1">
    <property type="nucleotide sequence ID" value="NC_003047.1"/>
</dbReference>
<dbReference type="SMR" id="Q92QG4"/>
<dbReference type="EnsemblBacteria" id="CAC45941">
    <property type="protein sequence ID" value="CAC45941"/>
    <property type="gene ID" value="SMc01303"/>
</dbReference>
<dbReference type="GeneID" id="89575686"/>
<dbReference type="KEGG" id="sme:SMc01303"/>
<dbReference type="PATRIC" id="fig|266834.11.peg.2778"/>
<dbReference type="eggNOG" id="COG0092">
    <property type="taxonomic scope" value="Bacteria"/>
</dbReference>
<dbReference type="HOGENOM" id="CLU_058591_0_2_5"/>
<dbReference type="OrthoDB" id="9806396at2"/>
<dbReference type="Proteomes" id="UP000001976">
    <property type="component" value="Chromosome"/>
</dbReference>
<dbReference type="GO" id="GO:0022627">
    <property type="term" value="C:cytosolic small ribosomal subunit"/>
    <property type="evidence" value="ECO:0007669"/>
    <property type="project" value="TreeGrafter"/>
</dbReference>
<dbReference type="GO" id="GO:0003729">
    <property type="term" value="F:mRNA binding"/>
    <property type="evidence" value="ECO:0007669"/>
    <property type="project" value="UniProtKB-UniRule"/>
</dbReference>
<dbReference type="GO" id="GO:0019843">
    <property type="term" value="F:rRNA binding"/>
    <property type="evidence" value="ECO:0007669"/>
    <property type="project" value="UniProtKB-UniRule"/>
</dbReference>
<dbReference type="GO" id="GO:0003735">
    <property type="term" value="F:structural constituent of ribosome"/>
    <property type="evidence" value="ECO:0007669"/>
    <property type="project" value="InterPro"/>
</dbReference>
<dbReference type="GO" id="GO:0006412">
    <property type="term" value="P:translation"/>
    <property type="evidence" value="ECO:0007669"/>
    <property type="project" value="UniProtKB-UniRule"/>
</dbReference>
<dbReference type="CDD" id="cd02412">
    <property type="entry name" value="KH-II_30S_S3"/>
    <property type="match status" value="1"/>
</dbReference>
<dbReference type="FunFam" id="3.30.1140.32:FF:000001">
    <property type="entry name" value="30S ribosomal protein S3"/>
    <property type="match status" value="1"/>
</dbReference>
<dbReference type="FunFam" id="3.30.300.20:FF:000001">
    <property type="entry name" value="30S ribosomal protein S3"/>
    <property type="match status" value="1"/>
</dbReference>
<dbReference type="Gene3D" id="3.30.300.20">
    <property type="match status" value="1"/>
</dbReference>
<dbReference type="Gene3D" id="3.30.1140.32">
    <property type="entry name" value="Ribosomal protein S3, C-terminal domain"/>
    <property type="match status" value="1"/>
</dbReference>
<dbReference type="HAMAP" id="MF_01309_B">
    <property type="entry name" value="Ribosomal_uS3_B"/>
    <property type="match status" value="1"/>
</dbReference>
<dbReference type="InterPro" id="IPR004087">
    <property type="entry name" value="KH_dom"/>
</dbReference>
<dbReference type="InterPro" id="IPR015946">
    <property type="entry name" value="KH_dom-like_a/b"/>
</dbReference>
<dbReference type="InterPro" id="IPR004044">
    <property type="entry name" value="KH_dom_type_2"/>
</dbReference>
<dbReference type="InterPro" id="IPR009019">
    <property type="entry name" value="KH_sf_prok-type"/>
</dbReference>
<dbReference type="InterPro" id="IPR036419">
    <property type="entry name" value="Ribosomal_S3_C_sf"/>
</dbReference>
<dbReference type="InterPro" id="IPR005704">
    <property type="entry name" value="Ribosomal_uS3_bac-typ"/>
</dbReference>
<dbReference type="InterPro" id="IPR001351">
    <property type="entry name" value="Ribosomal_uS3_C"/>
</dbReference>
<dbReference type="InterPro" id="IPR018280">
    <property type="entry name" value="Ribosomal_uS3_CS"/>
</dbReference>
<dbReference type="NCBIfam" id="TIGR01009">
    <property type="entry name" value="rpsC_bact"/>
    <property type="match status" value="1"/>
</dbReference>
<dbReference type="PANTHER" id="PTHR11760">
    <property type="entry name" value="30S/40S RIBOSOMAL PROTEIN S3"/>
    <property type="match status" value="1"/>
</dbReference>
<dbReference type="PANTHER" id="PTHR11760:SF19">
    <property type="entry name" value="SMALL RIBOSOMAL SUBUNIT PROTEIN US3C"/>
    <property type="match status" value="1"/>
</dbReference>
<dbReference type="Pfam" id="PF07650">
    <property type="entry name" value="KH_2"/>
    <property type="match status" value="1"/>
</dbReference>
<dbReference type="Pfam" id="PF00189">
    <property type="entry name" value="Ribosomal_S3_C"/>
    <property type="match status" value="1"/>
</dbReference>
<dbReference type="SMART" id="SM00322">
    <property type="entry name" value="KH"/>
    <property type="match status" value="1"/>
</dbReference>
<dbReference type="SUPFAM" id="SSF54814">
    <property type="entry name" value="Prokaryotic type KH domain (KH-domain type II)"/>
    <property type="match status" value="1"/>
</dbReference>
<dbReference type="SUPFAM" id="SSF54821">
    <property type="entry name" value="Ribosomal protein S3 C-terminal domain"/>
    <property type="match status" value="1"/>
</dbReference>
<dbReference type="PROSITE" id="PS50823">
    <property type="entry name" value="KH_TYPE_2"/>
    <property type="match status" value="1"/>
</dbReference>
<dbReference type="PROSITE" id="PS00548">
    <property type="entry name" value="RIBOSOMAL_S3"/>
    <property type="match status" value="1"/>
</dbReference>
<feature type="chain" id="PRO_0000130183" description="Small ribosomal subunit protein uS3">
    <location>
        <begin position="1"/>
        <end position="237"/>
    </location>
</feature>
<feature type="domain" description="KH type-2" evidence="1">
    <location>
        <begin position="39"/>
        <end position="107"/>
    </location>
</feature>
<feature type="region of interest" description="Disordered" evidence="2">
    <location>
        <begin position="213"/>
        <end position="237"/>
    </location>
</feature>
<evidence type="ECO:0000255" key="1">
    <source>
        <dbReference type="HAMAP-Rule" id="MF_01309"/>
    </source>
</evidence>
<evidence type="ECO:0000256" key="2">
    <source>
        <dbReference type="SAM" id="MobiDB-lite"/>
    </source>
</evidence>
<evidence type="ECO:0000305" key="3"/>
<proteinExistence type="inferred from homology"/>
<comment type="function">
    <text evidence="1">Binds the lower part of the 30S subunit head. Binds mRNA in the 70S ribosome, positioning it for translation.</text>
</comment>
<comment type="subunit">
    <text evidence="1">Part of the 30S ribosomal subunit. Forms a tight complex with proteins S10 and S14.</text>
</comment>
<comment type="similarity">
    <text evidence="1">Belongs to the universal ribosomal protein uS3 family.</text>
</comment>
<protein>
    <recommendedName>
        <fullName evidence="1">Small ribosomal subunit protein uS3</fullName>
    </recommendedName>
    <alternativeName>
        <fullName evidence="3">30S ribosomal protein S3</fullName>
    </alternativeName>
</protein>
<organism>
    <name type="scientific">Rhizobium meliloti (strain 1021)</name>
    <name type="common">Ensifer meliloti</name>
    <name type="synonym">Sinorhizobium meliloti</name>
    <dbReference type="NCBI Taxonomy" id="266834"/>
    <lineage>
        <taxon>Bacteria</taxon>
        <taxon>Pseudomonadati</taxon>
        <taxon>Pseudomonadota</taxon>
        <taxon>Alphaproteobacteria</taxon>
        <taxon>Hyphomicrobiales</taxon>
        <taxon>Rhizobiaceae</taxon>
        <taxon>Sinorhizobium/Ensifer group</taxon>
        <taxon>Sinorhizobium</taxon>
    </lineage>
</organism>
<sequence>MGQKINPIGFRLGINRTWDSRWFADNAEYGQLLHEDLKIRAYLMEELKSAGIAKVVIERPHKKCRVTIHSARPGLIIGKKGADIEKLRKKLSEMTNSETHLNIVEVRKPEVDATLVAQSIAQQLERRVAFRRAMKRAVQSAMRLGAEGIKITCAGRLGGAEIARTEWYREGRVPLHTLRADIDYGTAEAETAFGICGVKVWIFKGEILEHDPMASERRATESDNQGGSGRERRRENA</sequence>
<name>RS3_RHIME</name>
<gene>
    <name evidence="1" type="primary">rpsC</name>
    <name type="ordered locus">R01362</name>
    <name type="ORF">SMc01303</name>
</gene>
<reference key="1">
    <citation type="journal article" date="2001" name="Proc. Natl. Acad. Sci. U.S.A.">
        <title>Analysis of the chromosome sequence of the legume symbiont Sinorhizobium meliloti strain 1021.</title>
        <authorList>
            <person name="Capela D."/>
            <person name="Barloy-Hubler F."/>
            <person name="Gouzy J."/>
            <person name="Bothe G."/>
            <person name="Ampe F."/>
            <person name="Batut J."/>
            <person name="Boistard P."/>
            <person name="Becker A."/>
            <person name="Boutry M."/>
            <person name="Cadieu E."/>
            <person name="Dreano S."/>
            <person name="Gloux S."/>
            <person name="Godrie T."/>
            <person name="Goffeau A."/>
            <person name="Kahn D."/>
            <person name="Kiss E."/>
            <person name="Lelaure V."/>
            <person name="Masuy D."/>
            <person name="Pohl T."/>
            <person name="Portetelle D."/>
            <person name="Puehler A."/>
            <person name="Purnelle B."/>
            <person name="Ramsperger U."/>
            <person name="Renard C."/>
            <person name="Thebault P."/>
            <person name="Vandenbol M."/>
            <person name="Weidner S."/>
            <person name="Galibert F."/>
        </authorList>
    </citation>
    <scope>NUCLEOTIDE SEQUENCE [LARGE SCALE GENOMIC DNA]</scope>
    <source>
        <strain>1021</strain>
    </source>
</reference>
<reference key="2">
    <citation type="journal article" date="2001" name="Science">
        <title>The composite genome of the legume symbiont Sinorhizobium meliloti.</title>
        <authorList>
            <person name="Galibert F."/>
            <person name="Finan T.M."/>
            <person name="Long S.R."/>
            <person name="Puehler A."/>
            <person name="Abola P."/>
            <person name="Ampe F."/>
            <person name="Barloy-Hubler F."/>
            <person name="Barnett M.J."/>
            <person name="Becker A."/>
            <person name="Boistard P."/>
            <person name="Bothe G."/>
            <person name="Boutry M."/>
            <person name="Bowser L."/>
            <person name="Buhrmester J."/>
            <person name="Cadieu E."/>
            <person name="Capela D."/>
            <person name="Chain P."/>
            <person name="Cowie A."/>
            <person name="Davis R.W."/>
            <person name="Dreano S."/>
            <person name="Federspiel N.A."/>
            <person name="Fisher R.F."/>
            <person name="Gloux S."/>
            <person name="Godrie T."/>
            <person name="Goffeau A."/>
            <person name="Golding B."/>
            <person name="Gouzy J."/>
            <person name="Gurjal M."/>
            <person name="Hernandez-Lucas I."/>
            <person name="Hong A."/>
            <person name="Huizar L."/>
            <person name="Hyman R.W."/>
            <person name="Jones T."/>
            <person name="Kahn D."/>
            <person name="Kahn M.L."/>
            <person name="Kalman S."/>
            <person name="Keating D.H."/>
            <person name="Kiss E."/>
            <person name="Komp C."/>
            <person name="Lelaure V."/>
            <person name="Masuy D."/>
            <person name="Palm C."/>
            <person name="Peck M.C."/>
            <person name="Pohl T.M."/>
            <person name="Portetelle D."/>
            <person name="Purnelle B."/>
            <person name="Ramsperger U."/>
            <person name="Surzycki R."/>
            <person name="Thebault P."/>
            <person name="Vandenbol M."/>
            <person name="Vorhoelter F.J."/>
            <person name="Weidner S."/>
            <person name="Wells D.H."/>
            <person name="Wong K."/>
            <person name="Yeh K.-C."/>
            <person name="Batut J."/>
        </authorList>
    </citation>
    <scope>NUCLEOTIDE SEQUENCE [LARGE SCALE GENOMIC DNA]</scope>
    <source>
        <strain>1021</strain>
    </source>
</reference>
<keyword id="KW-1185">Reference proteome</keyword>
<keyword id="KW-0687">Ribonucleoprotein</keyword>
<keyword id="KW-0689">Ribosomal protein</keyword>
<keyword id="KW-0694">RNA-binding</keyword>
<keyword id="KW-0699">rRNA-binding</keyword>
<accession>Q92QG4</accession>